<protein>
    <recommendedName>
        <fullName evidence="1">tRNA modification GTPase MnmE</fullName>
        <ecNumber evidence="1">3.6.-.-</ecNumber>
    </recommendedName>
</protein>
<accession>Q3MBM5</accession>
<organism>
    <name type="scientific">Trichormus variabilis (strain ATCC 29413 / PCC 7937)</name>
    <name type="common">Anabaena variabilis</name>
    <dbReference type="NCBI Taxonomy" id="240292"/>
    <lineage>
        <taxon>Bacteria</taxon>
        <taxon>Bacillati</taxon>
        <taxon>Cyanobacteriota</taxon>
        <taxon>Cyanophyceae</taxon>
        <taxon>Nostocales</taxon>
        <taxon>Nostocaceae</taxon>
        <taxon>Trichormus</taxon>
    </lineage>
</organism>
<dbReference type="EC" id="3.6.-.-" evidence="1"/>
<dbReference type="EMBL" id="CP000117">
    <property type="protein sequence ID" value="ABA21611.1"/>
    <property type="molecule type" value="Genomic_DNA"/>
</dbReference>
<dbReference type="SMR" id="Q3MBM5"/>
<dbReference type="STRING" id="240292.Ava_1989"/>
<dbReference type="KEGG" id="ava:Ava_1989"/>
<dbReference type="eggNOG" id="COG0486">
    <property type="taxonomic scope" value="Bacteria"/>
</dbReference>
<dbReference type="HOGENOM" id="CLU_019624_4_1_3"/>
<dbReference type="Proteomes" id="UP000002533">
    <property type="component" value="Chromosome"/>
</dbReference>
<dbReference type="GO" id="GO:0005829">
    <property type="term" value="C:cytosol"/>
    <property type="evidence" value="ECO:0007669"/>
    <property type="project" value="TreeGrafter"/>
</dbReference>
<dbReference type="GO" id="GO:0005525">
    <property type="term" value="F:GTP binding"/>
    <property type="evidence" value="ECO:0007669"/>
    <property type="project" value="UniProtKB-UniRule"/>
</dbReference>
<dbReference type="GO" id="GO:0003924">
    <property type="term" value="F:GTPase activity"/>
    <property type="evidence" value="ECO:0007669"/>
    <property type="project" value="UniProtKB-UniRule"/>
</dbReference>
<dbReference type="GO" id="GO:0046872">
    <property type="term" value="F:metal ion binding"/>
    <property type="evidence" value="ECO:0007669"/>
    <property type="project" value="UniProtKB-KW"/>
</dbReference>
<dbReference type="GO" id="GO:0030488">
    <property type="term" value="P:tRNA methylation"/>
    <property type="evidence" value="ECO:0007669"/>
    <property type="project" value="TreeGrafter"/>
</dbReference>
<dbReference type="GO" id="GO:0002098">
    <property type="term" value="P:tRNA wobble uridine modification"/>
    <property type="evidence" value="ECO:0007669"/>
    <property type="project" value="TreeGrafter"/>
</dbReference>
<dbReference type="CDD" id="cd04164">
    <property type="entry name" value="trmE"/>
    <property type="match status" value="1"/>
</dbReference>
<dbReference type="CDD" id="cd14858">
    <property type="entry name" value="TrmE_N"/>
    <property type="match status" value="1"/>
</dbReference>
<dbReference type="FunFam" id="3.30.1360.120:FF:000003">
    <property type="entry name" value="tRNA modification GTPase MnmE"/>
    <property type="match status" value="1"/>
</dbReference>
<dbReference type="FunFam" id="3.40.50.300:FF:000494">
    <property type="entry name" value="tRNA modification GTPase MnmE"/>
    <property type="match status" value="1"/>
</dbReference>
<dbReference type="Gene3D" id="3.40.50.300">
    <property type="entry name" value="P-loop containing nucleotide triphosphate hydrolases"/>
    <property type="match status" value="1"/>
</dbReference>
<dbReference type="Gene3D" id="3.30.1360.120">
    <property type="entry name" value="Probable tRNA modification gtpase trme, domain 1"/>
    <property type="match status" value="1"/>
</dbReference>
<dbReference type="Gene3D" id="1.20.120.430">
    <property type="entry name" value="tRNA modification GTPase MnmE domain 2"/>
    <property type="match status" value="1"/>
</dbReference>
<dbReference type="HAMAP" id="MF_00379">
    <property type="entry name" value="GTPase_MnmE"/>
    <property type="match status" value="1"/>
</dbReference>
<dbReference type="InterPro" id="IPR031168">
    <property type="entry name" value="G_TrmE"/>
</dbReference>
<dbReference type="InterPro" id="IPR006073">
    <property type="entry name" value="GTP-bd"/>
</dbReference>
<dbReference type="InterPro" id="IPR018948">
    <property type="entry name" value="GTP-bd_TrmE_N"/>
</dbReference>
<dbReference type="InterPro" id="IPR004520">
    <property type="entry name" value="GTPase_MnmE"/>
</dbReference>
<dbReference type="InterPro" id="IPR027368">
    <property type="entry name" value="MnmE_dom2"/>
</dbReference>
<dbReference type="InterPro" id="IPR025867">
    <property type="entry name" value="MnmE_helical"/>
</dbReference>
<dbReference type="InterPro" id="IPR027417">
    <property type="entry name" value="P-loop_NTPase"/>
</dbReference>
<dbReference type="InterPro" id="IPR005225">
    <property type="entry name" value="Small_GTP-bd"/>
</dbReference>
<dbReference type="InterPro" id="IPR027266">
    <property type="entry name" value="TrmE/GcvT_dom1"/>
</dbReference>
<dbReference type="NCBIfam" id="TIGR00450">
    <property type="entry name" value="mnmE_trmE_thdF"/>
    <property type="match status" value="1"/>
</dbReference>
<dbReference type="NCBIfam" id="NF003661">
    <property type="entry name" value="PRK05291.1-3"/>
    <property type="match status" value="1"/>
</dbReference>
<dbReference type="NCBIfam" id="TIGR00231">
    <property type="entry name" value="small_GTP"/>
    <property type="match status" value="1"/>
</dbReference>
<dbReference type="PANTHER" id="PTHR42714">
    <property type="entry name" value="TRNA MODIFICATION GTPASE GTPBP3"/>
    <property type="match status" value="1"/>
</dbReference>
<dbReference type="PANTHER" id="PTHR42714:SF2">
    <property type="entry name" value="TRNA MODIFICATION GTPASE GTPBP3, MITOCHONDRIAL"/>
    <property type="match status" value="1"/>
</dbReference>
<dbReference type="Pfam" id="PF01926">
    <property type="entry name" value="MMR_HSR1"/>
    <property type="match status" value="1"/>
</dbReference>
<dbReference type="Pfam" id="PF12631">
    <property type="entry name" value="MnmE_helical"/>
    <property type="match status" value="1"/>
</dbReference>
<dbReference type="Pfam" id="PF10396">
    <property type="entry name" value="TrmE_N"/>
    <property type="match status" value="1"/>
</dbReference>
<dbReference type="PRINTS" id="PR00449">
    <property type="entry name" value="RASTRNSFRMNG"/>
</dbReference>
<dbReference type="SUPFAM" id="SSF52540">
    <property type="entry name" value="P-loop containing nucleoside triphosphate hydrolases"/>
    <property type="match status" value="1"/>
</dbReference>
<dbReference type="SUPFAM" id="SSF116878">
    <property type="entry name" value="TrmE connector domain"/>
    <property type="match status" value="1"/>
</dbReference>
<dbReference type="PROSITE" id="PS51709">
    <property type="entry name" value="G_TRME"/>
    <property type="match status" value="1"/>
</dbReference>
<evidence type="ECO:0000255" key="1">
    <source>
        <dbReference type="HAMAP-Rule" id="MF_00379"/>
    </source>
</evidence>
<sequence>MTQLLAITGTIAAIATAIVPQQGSVGIVRVSGSQAIAIAQTLFHAPGKQVWESHRILYGYIRHPQTRQIVDEALLLLMKAPRSYTREDVVEFHCHGGIMAVQQVLQLCLEGGARLAQPGEFTLRAFLNGRLDLTQAESIADLVGARSPQAAQTALAGLQGKLAHPIRQLRANCLDILAEIEARIDFEEDLPPLDDEKIISDIENIAAEISQLLATKDKGELLRTGLKVAIVGRPNVGKSSLLNAWSQSDRAIVTDLPGTTRDVVESQLVVGGIPVQVLDTAGIRETSDQVEKIGVERSRQAANTADLVLLTIDAATGWTTGDQEIYEQVKHRPLILVMNKIDLVDKKLITSLEYPKNITQIVHTAAAQKQGIDALETAILEIVQTGKVKAADMDLAINQRQAAALTQAKISLEQVQATITQQLPLDFWTIDLRGAIQALGEITGEEVTESVLDRIFSRFCIGK</sequence>
<keyword id="KW-0963">Cytoplasm</keyword>
<keyword id="KW-0342">GTP-binding</keyword>
<keyword id="KW-0378">Hydrolase</keyword>
<keyword id="KW-0460">Magnesium</keyword>
<keyword id="KW-0479">Metal-binding</keyword>
<keyword id="KW-0547">Nucleotide-binding</keyword>
<keyword id="KW-0630">Potassium</keyword>
<keyword id="KW-0819">tRNA processing</keyword>
<name>MNME_TRIV2</name>
<comment type="function">
    <text evidence="1">Exhibits a very high intrinsic GTPase hydrolysis rate. Involved in the addition of a carboxymethylaminomethyl (cmnm) group at the wobble position (U34) of certain tRNAs, forming tRNA-cmnm(5)s(2)U34.</text>
</comment>
<comment type="cofactor">
    <cofactor evidence="1">
        <name>K(+)</name>
        <dbReference type="ChEBI" id="CHEBI:29103"/>
    </cofactor>
    <text evidence="1">Binds 1 potassium ion per subunit.</text>
</comment>
<comment type="subunit">
    <text evidence="1">Homodimer. Heterotetramer of two MnmE and two MnmG subunits.</text>
</comment>
<comment type="subcellular location">
    <subcellularLocation>
        <location evidence="1">Cytoplasm</location>
    </subcellularLocation>
</comment>
<comment type="similarity">
    <text evidence="1">Belongs to the TRAFAC class TrmE-Era-EngA-EngB-Septin-like GTPase superfamily. TrmE GTPase family.</text>
</comment>
<reference key="1">
    <citation type="journal article" date="2014" name="Stand. Genomic Sci.">
        <title>Complete genome sequence of Anabaena variabilis ATCC 29413.</title>
        <authorList>
            <person name="Thiel T."/>
            <person name="Pratte B.S."/>
            <person name="Zhong J."/>
            <person name="Goodwin L."/>
            <person name="Copeland A."/>
            <person name="Lucas S."/>
            <person name="Han C."/>
            <person name="Pitluck S."/>
            <person name="Land M.L."/>
            <person name="Kyrpides N.C."/>
            <person name="Woyke T."/>
        </authorList>
    </citation>
    <scope>NUCLEOTIDE SEQUENCE [LARGE SCALE GENOMIC DNA]</scope>
    <source>
        <strain>ATCC 29413 / PCC 7937</strain>
    </source>
</reference>
<feature type="chain" id="PRO_0000345704" description="tRNA modification GTPase MnmE">
    <location>
        <begin position="1"/>
        <end position="463"/>
    </location>
</feature>
<feature type="domain" description="TrmE-type G">
    <location>
        <begin position="225"/>
        <end position="384"/>
    </location>
</feature>
<feature type="binding site" evidence="1">
    <location>
        <position position="29"/>
    </location>
    <ligand>
        <name>(6S)-5-formyl-5,6,7,8-tetrahydrofolate</name>
        <dbReference type="ChEBI" id="CHEBI:57457"/>
    </ligand>
</feature>
<feature type="binding site" evidence="1">
    <location>
        <position position="91"/>
    </location>
    <ligand>
        <name>(6S)-5-formyl-5,6,7,8-tetrahydrofolate</name>
        <dbReference type="ChEBI" id="CHEBI:57457"/>
    </ligand>
</feature>
<feature type="binding site" evidence="1">
    <location>
        <position position="130"/>
    </location>
    <ligand>
        <name>(6S)-5-formyl-5,6,7,8-tetrahydrofolate</name>
        <dbReference type="ChEBI" id="CHEBI:57457"/>
    </ligand>
</feature>
<feature type="binding site" evidence="1">
    <location>
        <begin position="235"/>
        <end position="240"/>
    </location>
    <ligand>
        <name>GTP</name>
        <dbReference type="ChEBI" id="CHEBI:37565"/>
    </ligand>
</feature>
<feature type="binding site" evidence="1">
    <location>
        <position position="235"/>
    </location>
    <ligand>
        <name>K(+)</name>
        <dbReference type="ChEBI" id="CHEBI:29103"/>
    </ligand>
</feature>
<feature type="binding site" evidence="1">
    <location>
        <position position="239"/>
    </location>
    <ligand>
        <name>Mg(2+)</name>
        <dbReference type="ChEBI" id="CHEBI:18420"/>
    </ligand>
</feature>
<feature type="binding site" evidence="1">
    <location>
        <begin position="254"/>
        <end position="260"/>
    </location>
    <ligand>
        <name>GTP</name>
        <dbReference type="ChEBI" id="CHEBI:37565"/>
    </ligand>
</feature>
<feature type="binding site" evidence="1">
    <location>
        <position position="254"/>
    </location>
    <ligand>
        <name>K(+)</name>
        <dbReference type="ChEBI" id="CHEBI:29103"/>
    </ligand>
</feature>
<feature type="binding site" evidence="1">
    <location>
        <position position="256"/>
    </location>
    <ligand>
        <name>K(+)</name>
        <dbReference type="ChEBI" id="CHEBI:29103"/>
    </ligand>
</feature>
<feature type="binding site" evidence="1">
    <location>
        <position position="259"/>
    </location>
    <ligand>
        <name>K(+)</name>
        <dbReference type="ChEBI" id="CHEBI:29103"/>
    </ligand>
</feature>
<feature type="binding site" evidence="1">
    <location>
        <position position="260"/>
    </location>
    <ligand>
        <name>Mg(2+)</name>
        <dbReference type="ChEBI" id="CHEBI:18420"/>
    </ligand>
</feature>
<feature type="binding site" evidence="1">
    <location>
        <begin position="279"/>
        <end position="282"/>
    </location>
    <ligand>
        <name>GTP</name>
        <dbReference type="ChEBI" id="CHEBI:37565"/>
    </ligand>
</feature>
<feature type="binding site" evidence="1">
    <location>
        <position position="463"/>
    </location>
    <ligand>
        <name>(6S)-5-formyl-5,6,7,8-tetrahydrofolate</name>
        <dbReference type="ChEBI" id="CHEBI:57457"/>
    </ligand>
</feature>
<proteinExistence type="inferred from homology"/>
<gene>
    <name evidence="1" type="primary">mnmE</name>
    <name evidence="1" type="synonym">trmE</name>
    <name type="ordered locus">Ava_1989</name>
</gene>